<gene>
    <name evidence="1" type="primary">ackA</name>
    <name type="ordered locus">Mflv_0204</name>
</gene>
<proteinExistence type="inferred from homology"/>
<organism>
    <name type="scientific">Mycolicibacterium gilvum (strain PYR-GCK)</name>
    <name type="common">Mycobacterium gilvum (strain PYR-GCK)</name>
    <dbReference type="NCBI Taxonomy" id="350054"/>
    <lineage>
        <taxon>Bacteria</taxon>
        <taxon>Bacillati</taxon>
        <taxon>Actinomycetota</taxon>
        <taxon>Actinomycetes</taxon>
        <taxon>Mycobacteriales</taxon>
        <taxon>Mycobacteriaceae</taxon>
        <taxon>Mycolicibacterium</taxon>
    </lineage>
</organism>
<feature type="chain" id="PRO_1000089982" description="Acetate kinase">
    <location>
        <begin position="1"/>
        <end position="386"/>
    </location>
</feature>
<feature type="active site" description="Proton donor/acceptor" evidence="1">
    <location>
        <position position="131"/>
    </location>
</feature>
<feature type="binding site" evidence="1">
    <location>
        <position position="9"/>
    </location>
    <ligand>
        <name>Mg(2+)</name>
        <dbReference type="ChEBI" id="CHEBI:18420"/>
    </ligand>
</feature>
<feature type="binding site" evidence="1">
    <location>
        <position position="16"/>
    </location>
    <ligand>
        <name>ATP</name>
        <dbReference type="ChEBI" id="CHEBI:30616"/>
    </ligand>
</feature>
<feature type="binding site" evidence="1">
    <location>
        <position position="74"/>
    </location>
    <ligand>
        <name>substrate</name>
    </ligand>
</feature>
<feature type="binding site" evidence="1">
    <location>
        <begin position="191"/>
        <end position="195"/>
    </location>
    <ligand>
        <name>ATP</name>
        <dbReference type="ChEBI" id="CHEBI:30616"/>
    </ligand>
</feature>
<feature type="binding site" evidence="1">
    <location>
        <begin position="265"/>
        <end position="267"/>
    </location>
    <ligand>
        <name>ATP</name>
        <dbReference type="ChEBI" id="CHEBI:30616"/>
    </ligand>
</feature>
<feature type="binding site" evidence="1">
    <location>
        <begin position="313"/>
        <end position="317"/>
    </location>
    <ligand>
        <name>ATP</name>
        <dbReference type="ChEBI" id="CHEBI:30616"/>
    </ligand>
</feature>
<feature type="binding site" evidence="1">
    <location>
        <position position="367"/>
    </location>
    <ligand>
        <name>Mg(2+)</name>
        <dbReference type="ChEBI" id="CHEBI:18420"/>
    </ligand>
</feature>
<feature type="site" description="Transition state stabilizer" evidence="1">
    <location>
        <position position="163"/>
    </location>
</feature>
<feature type="site" description="Transition state stabilizer" evidence="1">
    <location>
        <position position="224"/>
    </location>
</feature>
<comment type="function">
    <text evidence="1">Catalyzes the formation of acetyl phosphate from acetate and ATP. Can also catalyze the reverse reaction.</text>
</comment>
<comment type="catalytic activity">
    <reaction evidence="1">
        <text>acetate + ATP = acetyl phosphate + ADP</text>
        <dbReference type="Rhea" id="RHEA:11352"/>
        <dbReference type="ChEBI" id="CHEBI:22191"/>
        <dbReference type="ChEBI" id="CHEBI:30089"/>
        <dbReference type="ChEBI" id="CHEBI:30616"/>
        <dbReference type="ChEBI" id="CHEBI:456216"/>
        <dbReference type="EC" id="2.7.2.1"/>
    </reaction>
</comment>
<comment type="cofactor">
    <cofactor evidence="1">
        <name>Mg(2+)</name>
        <dbReference type="ChEBI" id="CHEBI:18420"/>
    </cofactor>
    <cofactor evidence="1">
        <name>Mn(2+)</name>
        <dbReference type="ChEBI" id="CHEBI:29035"/>
    </cofactor>
    <text evidence="1">Mg(2+). Can also accept Mn(2+).</text>
</comment>
<comment type="pathway">
    <text evidence="1">Metabolic intermediate biosynthesis; acetyl-CoA biosynthesis; acetyl-CoA from acetate: step 1/2.</text>
</comment>
<comment type="subunit">
    <text evidence="1">Homodimer.</text>
</comment>
<comment type="subcellular location">
    <subcellularLocation>
        <location evidence="1">Cytoplasm</location>
    </subcellularLocation>
</comment>
<comment type="similarity">
    <text evidence="1">Belongs to the acetokinase family.</text>
</comment>
<name>ACKA_MYCGI</name>
<dbReference type="EC" id="2.7.2.1" evidence="1"/>
<dbReference type="EMBL" id="CP000656">
    <property type="protein sequence ID" value="ABP42699.1"/>
    <property type="molecule type" value="Genomic_DNA"/>
</dbReference>
<dbReference type="SMR" id="A4T166"/>
<dbReference type="STRING" id="350054.Mflv_0204"/>
<dbReference type="KEGG" id="mgi:Mflv_0204"/>
<dbReference type="eggNOG" id="COG0282">
    <property type="taxonomic scope" value="Bacteria"/>
</dbReference>
<dbReference type="HOGENOM" id="CLU_020352_0_1_11"/>
<dbReference type="OrthoDB" id="9802453at2"/>
<dbReference type="UniPathway" id="UPA00340">
    <property type="reaction ID" value="UER00458"/>
</dbReference>
<dbReference type="GO" id="GO:0005737">
    <property type="term" value="C:cytoplasm"/>
    <property type="evidence" value="ECO:0007669"/>
    <property type="project" value="UniProtKB-SubCell"/>
</dbReference>
<dbReference type="GO" id="GO:0008776">
    <property type="term" value="F:acetate kinase activity"/>
    <property type="evidence" value="ECO:0007669"/>
    <property type="project" value="UniProtKB-UniRule"/>
</dbReference>
<dbReference type="GO" id="GO:0005524">
    <property type="term" value="F:ATP binding"/>
    <property type="evidence" value="ECO:0007669"/>
    <property type="project" value="UniProtKB-KW"/>
</dbReference>
<dbReference type="GO" id="GO:0000287">
    <property type="term" value="F:magnesium ion binding"/>
    <property type="evidence" value="ECO:0007669"/>
    <property type="project" value="UniProtKB-UniRule"/>
</dbReference>
<dbReference type="GO" id="GO:0006083">
    <property type="term" value="P:acetate metabolic process"/>
    <property type="evidence" value="ECO:0007669"/>
    <property type="project" value="TreeGrafter"/>
</dbReference>
<dbReference type="GO" id="GO:0006085">
    <property type="term" value="P:acetyl-CoA biosynthetic process"/>
    <property type="evidence" value="ECO:0007669"/>
    <property type="project" value="UniProtKB-UniRule"/>
</dbReference>
<dbReference type="CDD" id="cd24010">
    <property type="entry name" value="ASKHA_NBD_AcK_PK"/>
    <property type="match status" value="1"/>
</dbReference>
<dbReference type="Gene3D" id="3.30.420.40">
    <property type="match status" value="2"/>
</dbReference>
<dbReference type="HAMAP" id="MF_00020">
    <property type="entry name" value="Acetate_kinase"/>
    <property type="match status" value="1"/>
</dbReference>
<dbReference type="InterPro" id="IPR004372">
    <property type="entry name" value="Ac/propionate_kinase"/>
</dbReference>
<dbReference type="InterPro" id="IPR000890">
    <property type="entry name" value="Aliphatic_acid_kin_short-chain"/>
</dbReference>
<dbReference type="InterPro" id="IPR023865">
    <property type="entry name" value="Aliphatic_acid_kinase_CS"/>
</dbReference>
<dbReference type="InterPro" id="IPR043129">
    <property type="entry name" value="ATPase_NBD"/>
</dbReference>
<dbReference type="NCBIfam" id="TIGR00016">
    <property type="entry name" value="ackA"/>
    <property type="match status" value="1"/>
</dbReference>
<dbReference type="PANTHER" id="PTHR21060">
    <property type="entry name" value="ACETATE KINASE"/>
    <property type="match status" value="1"/>
</dbReference>
<dbReference type="PANTHER" id="PTHR21060:SF15">
    <property type="entry name" value="ACETATE KINASE-RELATED"/>
    <property type="match status" value="1"/>
</dbReference>
<dbReference type="Pfam" id="PF00871">
    <property type="entry name" value="Acetate_kinase"/>
    <property type="match status" value="1"/>
</dbReference>
<dbReference type="PIRSF" id="PIRSF000722">
    <property type="entry name" value="Acetate_prop_kin"/>
    <property type="match status" value="1"/>
</dbReference>
<dbReference type="PRINTS" id="PR00471">
    <property type="entry name" value="ACETATEKNASE"/>
</dbReference>
<dbReference type="SUPFAM" id="SSF53067">
    <property type="entry name" value="Actin-like ATPase domain"/>
    <property type="match status" value="2"/>
</dbReference>
<dbReference type="PROSITE" id="PS01075">
    <property type="entry name" value="ACETATE_KINASE_1"/>
    <property type="match status" value="1"/>
</dbReference>
<dbReference type="PROSITE" id="PS01076">
    <property type="entry name" value="ACETATE_KINASE_2"/>
    <property type="match status" value="1"/>
</dbReference>
<reference key="1">
    <citation type="submission" date="2007-04" db="EMBL/GenBank/DDBJ databases">
        <title>Complete sequence of chromosome of Mycobacterium gilvum PYR-GCK.</title>
        <authorList>
            <consortium name="US DOE Joint Genome Institute"/>
            <person name="Copeland A."/>
            <person name="Lucas S."/>
            <person name="Lapidus A."/>
            <person name="Barry K."/>
            <person name="Detter J.C."/>
            <person name="Glavina del Rio T."/>
            <person name="Hammon N."/>
            <person name="Israni S."/>
            <person name="Dalin E."/>
            <person name="Tice H."/>
            <person name="Pitluck S."/>
            <person name="Chain P."/>
            <person name="Malfatti S."/>
            <person name="Shin M."/>
            <person name="Vergez L."/>
            <person name="Schmutz J."/>
            <person name="Larimer F."/>
            <person name="Land M."/>
            <person name="Hauser L."/>
            <person name="Kyrpides N."/>
            <person name="Mikhailova N."/>
            <person name="Miller C."/>
            <person name="Richardson P."/>
        </authorList>
    </citation>
    <scope>NUCLEOTIDE SEQUENCE [LARGE SCALE GENOMIC DNA]</scope>
    <source>
        <strain>PYR-GCK</strain>
    </source>
</reference>
<sequence length="386" mass="40978">MTRTVLVLNSGSSSVKYAVLEPDSGVLIADGIVERIGQEGGAHDHAAAMRGVFDSLAADGHHLEDLGLVAVGHRVVHGGPDLYRPTIVDETVIDRLKELGPLAPLHNPPAVLGIEVARDALPDLPHVAVFDTAFFHDLPAAAATYAIDAEVARDWNIRRYGFHGTSHQYVSEQAAAFLDVPLESLSQIVLHLGNGASVSAIVGGRPVETSMGLTPMEGLVMGTRSGDVDPGVIFYLWREAGMPVEDIESMLNRRSGVRGLGGEIDFRELHRRIESGDDAAELAYEVYIHRLRKYIGAYLAILGSADVITFTAGVGENDAVVRRDALTGLAAFGIEIDEHLNDSPGRGARRISADGAPTTVLVIPTDEELAIARACTGVLGARPGDG</sequence>
<evidence type="ECO:0000255" key="1">
    <source>
        <dbReference type="HAMAP-Rule" id="MF_00020"/>
    </source>
</evidence>
<protein>
    <recommendedName>
        <fullName evidence="1">Acetate kinase</fullName>
        <ecNumber evidence="1">2.7.2.1</ecNumber>
    </recommendedName>
    <alternativeName>
        <fullName evidence="1">Acetokinase</fullName>
    </alternativeName>
</protein>
<keyword id="KW-0067">ATP-binding</keyword>
<keyword id="KW-0963">Cytoplasm</keyword>
<keyword id="KW-0418">Kinase</keyword>
<keyword id="KW-0460">Magnesium</keyword>
<keyword id="KW-0479">Metal-binding</keyword>
<keyword id="KW-0547">Nucleotide-binding</keyword>
<keyword id="KW-0808">Transferase</keyword>
<accession>A4T166</accession>